<dbReference type="EC" id="3.1.1.7" evidence="4"/>
<dbReference type="EMBL" id="AJ251640">
    <property type="protein sequence ID" value="CAC19790.1"/>
    <property type="molecule type" value="Genomic_DNA"/>
</dbReference>
<dbReference type="RefSeq" id="NP_571921.1">
    <property type="nucleotide sequence ID" value="NM_131846.2"/>
</dbReference>
<dbReference type="SMR" id="Q9DDE3"/>
<dbReference type="FunCoup" id="Q9DDE3">
    <property type="interactions" value="244"/>
</dbReference>
<dbReference type="STRING" id="7955.ENSDARP00000052988"/>
<dbReference type="ChEMBL" id="CHEMBL3308995"/>
<dbReference type="ESTHER" id="danre-ACHE">
    <property type="family name" value="ACHE"/>
</dbReference>
<dbReference type="MEROPS" id="S09.980"/>
<dbReference type="GlyCosmos" id="Q9DDE3">
    <property type="glycosylation" value="6 sites, No reported glycans"/>
</dbReference>
<dbReference type="PaxDb" id="7955-ENSDARP00000052988"/>
<dbReference type="Ensembl" id="ENSDART00000052989">
    <property type="protein sequence ID" value="ENSDARP00000052988"/>
    <property type="gene ID" value="ENSDARG00000031796"/>
</dbReference>
<dbReference type="GeneID" id="114549"/>
<dbReference type="KEGG" id="dre:114549"/>
<dbReference type="AGR" id="ZFIN:ZDB-GENE-010906-1"/>
<dbReference type="CTD" id="43"/>
<dbReference type="ZFIN" id="ZDB-GENE-010906-1">
    <property type="gene designation" value="ache"/>
</dbReference>
<dbReference type="eggNOG" id="KOG4389">
    <property type="taxonomic scope" value="Eukaryota"/>
</dbReference>
<dbReference type="HOGENOM" id="CLU_006586_13_0_1"/>
<dbReference type="InParanoid" id="Q9DDE3"/>
<dbReference type="OMA" id="CDHLVAP"/>
<dbReference type="OrthoDB" id="9000293at2759"/>
<dbReference type="PhylomeDB" id="Q9DDE3"/>
<dbReference type="TreeFam" id="TF315470"/>
<dbReference type="BRENDA" id="3.1.1.7">
    <property type="organism ID" value="928"/>
</dbReference>
<dbReference type="PRO" id="PR:Q9DDE3"/>
<dbReference type="Proteomes" id="UP000000437">
    <property type="component" value="Chromosome 7"/>
</dbReference>
<dbReference type="Bgee" id="ENSDARG00000031796">
    <property type="expression patterns" value="Expressed in muscle tissue and 25 other cell types or tissues"/>
</dbReference>
<dbReference type="ExpressionAtlas" id="Q9DDE3">
    <property type="expression patterns" value="baseline"/>
</dbReference>
<dbReference type="GO" id="GO:0005615">
    <property type="term" value="C:extracellular space"/>
    <property type="evidence" value="ECO:0000318"/>
    <property type="project" value="GO_Central"/>
</dbReference>
<dbReference type="GO" id="GO:0005886">
    <property type="term" value="C:plasma membrane"/>
    <property type="evidence" value="ECO:0000318"/>
    <property type="project" value="GO_Central"/>
</dbReference>
<dbReference type="GO" id="GO:0045202">
    <property type="term" value="C:synapse"/>
    <property type="evidence" value="ECO:0007669"/>
    <property type="project" value="UniProtKB-SubCell"/>
</dbReference>
<dbReference type="GO" id="GO:0003990">
    <property type="term" value="F:acetylcholinesterase activity"/>
    <property type="evidence" value="ECO:0000314"/>
    <property type="project" value="ZFIN"/>
</dbReference>
<dbReference type="GO" id="GO:0006581">
    <property type="term" value="P:acetylcholine catabolic process"/>
    <property type="evidence" value="ECO:0000314"/>
    <property type="project" value="ZFIN"/>
</dbReference>
<dbReference type="GO" id="GO:0071405">
    <property type="term" value="P:cellular response to methanol"/>
    <property type="evidence" value="ECO:0000314"/>
    <property type="project" value="ZFIN"/>
</dbReference>
<dbReference type="GO" id="GO:0019695">
    <property type="term" value="P:choline metabolic process"/>
    <property type="evidence" value="ECO:0000318"/>
    <property type="project" value="GO_Central"/>
</dbReference>
<dbReference type="GO" id="GO:0030239">
    <property type="term" value="P:myofibril assembly"/>
    <property type="evidence" value="ECO:0000315"/>
    <property type="project" value="ZFIN"/>
</dbReference>
<dbReference type="GO" id="GO:0007528">
    <property type="term" value="P:neuromuscular junction development"/>
    <property type="evidence" value="ECO:0000315"/>
    <property type="project" value="ZFIN"/>
</dbReference>
<dbReference type="GO" id="GO:0048666">
    <property type="term" value="P:neuron development"/>
    <property type="evidence" value="ECO:0000315"/>
    <property type="project" value="ZFIN"/>
</dbReference>
<dbReference type="GO" id="GO:0050803">
    <property type="term" value="P:regulation of synapse structure or activity"/>
    <property type="evidence" value="ECO:0000315"/>
    <property type="project" value="ZFIN"/>
</dbReference>
<dbReference type="GO" id="GO:0001975">
    <property type="term" value="P:response to amphetamine"/>
    <property type="evidence" value="ECO:0000315"/>
    <property type="project" value="ZFIN"/>
</dbReference>
<dbReference type="GO" id="GO:0045471">
    <property type="term" value="P:response to ethanol"/>
    <property type="evidence" value="ECO:0000314"/>
    <property type="project" value="ZFIN"/>
</dbReference>
<dbReference type="GO" id="GO:0009749">
    <property type="term" value="P:response to glucose"/>
    <property type="evidence" value="ECO:0000314"/>
    <property type="project" value="ZFIN"/>
</dbReference>
<dbReference type="CDD" id="cd00312">
    <property type="entry name" value="Esterase_lipase"/>
    <property type="match status" value="1"/>
</dbReference>
<dbReference type="Gene3D" id="3.40.50.1820">
    <property type="entry name" value="alpha/beta hydrolase"/>
    <property type="match status" value="1"/>
</dbReference>
<dbReference type="InterPro" id="IPR029058">
    <property type="entry name" value="AB_hydrolase_fold"/>
</dbReference>
<dbReference type="InterPro" id="IPR050654">
    <property type="entry name" value="AChE-related_enzymes"/>
</dbReference>
<dbReference type="InterPro" id="IPR014788">
    <property type="entry name" value="AChE_tetra"/>
</dbReference>
<dbReference type="InterPro" id="IPR002018">
    <property type="entry name" value="CarbesteraseB"/>
</dbReference>
<dbReference type="InterPro" id="IPR019826">
    <property type="entry name" value="Carboxylesterase_B_AS"/>
</dbReference>
<dbReference type="InterPro" id="IPR019819">
    <property type="entry name" value="Carboxylesterase_B_CS"/>
</dbReference>
<dbReference type="InterPro" id="IPR000997">
    <property type="entry name" value="Cholinesterase"/>
</dbReference>
<dbReference type="PANTHER" id="PTHR43918">
    <property type="entry name" value="ACETYLCHOLINESTERASE"/>
    <property type="match status" value="1"/>
</dbReference>
<dbReference type="PANTHER" id="PTHR43918:SF11">
    <property type="entry name" value="ACETYLCHOLINESTERASE"/>
    <property type="match status" value="1"/>
</dbReference>
<dbReference type="Pfam" id="PF08674">
    <property type="entry name" value="AChE_tetra"/>
    <property type="match status" value="1"/>
</dbReference>
<dbReference type="Pfam" id="PF00135">
    <property type="entry name" value="COesterase"/>
    <property type="match status" value="1"/>
</dbReference>
<dbReference type="PRINTS" id="PR00878">
    <property type="entry name" value="CHOLNESTRASE"/>
</dbReference>
<dbReference type="SUPFAM" id="SSF53474">
    <property type="entry name" value="alpha/beta-Hydrolases"/>
    <property type="match status" value="1"/>
</dbReference>
<dbReference type="PROSITE" id="PS00122">
    <property type="entry name" value="CARBOXYLESTERASE_B_1"/>
    <property type="match status" value="1"/>
</dbReference>
<dbReference type="PROSITE" id="PS00941">
    <property type="entry name" value="CARBOXYLESTERASE_B_2"/>
    <property type="match status" value="1"/>
</dbReference>
<gene>
    <name type="primary">ache</name>
</gene>
<proteinExistence type="evidence at protein level"/>
<accession>Q9DDE3</accession>
<reference key="1">
    <citation type="journal article" date="2001" name="J. Biol. Chem.">
        <title>Zebrafish acetylcholinesterase is encoded by a single gene localized on linkage group 7. gene structure and polymorphism; molecular forms and expression pattern during development.</title>
        <authorList>
            <person name="Bertrand C."/>
            <person name="Chatonnet A."/>
            <person name="Takke C."/>
            <person name="Yan Y."/>
            <person name="Postlethwait J."/>
            <person name="Toutant J.-P."/>
            <person name="Cousin X."/>
        </authorList>
    </citation>
    <scope>NUCLEOTIDE SEQUENCE [GENOMIC DNA]</scope>
    <scope>CATALYTIC ACTIVITY</scope>
    <scope>DEVELOPMENTAL STAGE</scope>
    <scope>SUBUNIT</scope>
    <scope>BIOPHYSICOCHEMICAL PROPERTIES</scope>
</reference>
<sequence>MKTSDILLLPTVLLTFLFHNCFAQAEPDLVVATRLGRVQGTRLPVPDRSHVIAFLGIPYAEPPIGKRRFKRAEPKKPWNNVFEAKEFSNACYQFVDTSYPGFPGIEMWNPNRVMSEDCLYLNVWVPPTPRPQNLTVMVWIYGGGFYSGSSSLDVYDGRYLAYTEKVVVVSMNYRVGAFGFLALNGSSDAPGNVGLYDQRLALQWVQENIHFFGGNPKQVTIFGESAGAASVGMHVLSPDSRPLFTRAILQSGVPNTPWATVTFDEARRRTTKLGKLVGCTWGNDTELIDCLRNKHPQELIDQEWQVLPWSSLFRFSFVPVVDGVFFPDTPDAMISSGNFKYTQILLGVNQDEGSYFLLYGAPGFSKDNESLISREDFLESVKMGVPHANDIGLEAVILQYTDWMDENNGQKNRDAMDDIVGDQNVICPLQHFAKSYAQYAALHAQSSAAAPGTLGWGNSGPTGYNSGNSHGAVYLYLFDHRASNLAWPEWMGVIHGYEIEFVFGLPLEKRLNYTAEEEKLSRRIMRYWANFARTGNPNVNTDGTMDSRRRWPQFSANEQKHVGLNTEPMKVHKGLRTQFCALWNRFLPRLLNITDNIDDVERQWKVEFHRWSSYMMHWKSQFDHYSKQERCTDL</sequence>
<protein>
    <recommendedName>
        <fullName>Acetylcholinesterase</fullName>
        <shortName evidence="5">AChE</shortName>
        <ecNumber evidence="4">3.1.1.7</ecNumber>
    </recommendedName>
</protein>
<name>ACES_DANRE</name>
<evidence type="ECO:0000250" key="1"/>
<evidence type="ECO:0000255" key="2"/>
<evidence type="ECO:0000255" key="3">
    <source>
        <dbReference type="PROSITE-ProRule" id="PRU10039"/>
    </source>
</evidence>
<evidence type="ECO:0000269" key="4">
    <source>
    </source>
</evidence>
<evidence type="ECO:0000303" key="5">
    <source>
    </source>
</evidence>
<evidence type="ECO:0000305" key="6"/>
<evidence type="ECO:0000305" key="7">
    <source>
    </source>
</evidence>
<keyword id="KW-1003">Cell membrane</keyword>
<keyword id="KW-1015">Disulfide bond</keyword>
<keyword id="KW-0325">Glycoprotein</keyword>
<keyword id="KW-0378">Hydrolase</keyword>
<keyword id="KW-0472">Membrane</keyword>
<keyword id="KW-0531">Neurotransmitter degradation</keyword>
<keyword id="KW-1185">Reference proteome</keyword>
<keyword id="KW-0964">Secreted</keyword>
<keyword id="KW-0719">Serine esterase</keyword>
<keyword id="KW-0732">Signal</keyword>
<keyword id="KW-0770">Synapse</keyword>
<organism>
    <name type="scientific">Danio rerio</name>
    <name type="common">Zebrafish</name>
    <name type="synonym">Brachydanio rerio</name>
    <dbReference type="NCBI Taxonomy" id="7955"/>
    <lineage>
        <taxon>Eukaryota</taxon>
        <taxon>Metazoa</taxon>
        <taxon>Chordata</taxon>
        <taxon>Craniata</taxon>
        <taxon>Vertebrata</taxon>
        <taxon>Euteleostomi</taxon>
        <taxon>Actinopterygii</taxon>
        <taxon>Neopterygii</taxon>
        <taxon>Teleostei</taxon>
        <taxon>Ostariophysi</taxon>
        <taxon>Cypriniformes</taxon>
        <taxon>Danionidae</taxon>
        <taxon>Danioninae</taxon>
        <taxon>Danio</taxon>
    </lineage>
</organism>
<comment type="function">
    <text>Terminates signal transduction at the neuromuscular junction by rapid hydrolysis of the acetylcholine released into the synaptic cleft.</text>
</comment>
<comment type="catalytic activity">
    <reaction evidence="4">
        <text>acetylcholine + H2O = choline + acetate + H(+)</text>
        <dbReference type="Rhea" id="RHEA:17561"/>
        <dbReference type="ChEBI" id="CHEBI:15354"/>
        <dbReference type="ChEBI" id="CHEBI:15355"/>
        <dbReference type="ChEBI" id="CHEBI:15377"/>
        <dbReference type="ChEBI" id="CHEBI:15378"/>
        <dbReference type="ChEBI" id="CHEBI:30089"/>
        <dbReference type="EC" id="3.1.1.7"/>
    </reaction>
    <physiologicalReaction direction="left-to-right" evidence="7">
        <dbReference type="Rhea" id="RHEA:17562"/>
    </physiologicalReaction>
</comment>
<comment type="biophysicochemical properties">
    <kinetics>
        <KM evidence="4">230 uM for acetylcholine</KM>
    </kinetics>
</comment>
<comment type="subunit">
    <text evidence="4">Dimers and collagen-tailed forms, in which catalytic tetramers are associated with anchoring proteins that attach them to the basal lamina or to cell membranes. In the collagen-tailed forms, subunits are associated with a specific collagen, COLQ, which triggers the formation of isoform T tetramers from dimers.</text>
</comment>
<comment type="subcellular location">
    <subcellularLocation>
        <location>Synapse</location>
    </subcellularLocation>
    <subcellularLocation>
        <location>Secreted</location>
    </subcellularLocation>
    <subcellularLocation>
        <location evidence="1">Cell membrane</location>
        <topology evidence="1">Peripheral membrane protein</topology>
    </subcellularLocation>
</comment>
<comment type="developmental stage">
    <text evidence="4">First detected in the trunk, in discrete regions of paraxial mesodermal segmental plate at 12 hours of development (6-somite stage). In older embryos a weak diffused staining is found, even in unsegmented presomitic mesoderm. Expression, probably located in myoblasts, proceeds in a rostro-caudal sequence according to the state of differentiation of the somites. Initial narrow staining progressively enlarged in the differentiating somite. At all stages, the ventral part of anterior somites showed more intense staining than the dorsal part. In the posterior brain expression and activity appear after 14 h. At 24h, detected in all primary neurons in the brain. Expression in cranial ganglia can be detected in whole embryo until about 36h. Expressed also in a sensory system in anterior and posteriorlateral line ganglia as seen in the embryo at 24h. In addition the heart shows strong expression from its early morphogenesis.</text>
</comment>
<comment type="miscellaneous">
    <text>No other isoforms exist. This protein corresponds to the T isoform in other species.</text>
</comment>
<comment type="similarity">
    <text evidence="6">Belongs to the type-B carboxylesterase/lipase family.</text>
</comment>
<feature type="signal peptide" evidence="2">
    <location>
        <begin position="1"/>
        <end position="23"/>
    </location>
</feature>
<feature type="chain" id="PRO_0000008593" description="Acetylcholinesterase">
    <location>
        <begin position="24"/>
        <end position="634"/>
    </location>
</feature>
<feature type="active site" description="Acyl-ester intermediate" evidence="3">
    <location>
        <position position="225"/>
    </location>
</feature>
<feature type="active site" description="Charge relay system" evidence="1">
    <location>
        <position position="352"/>
    </location>
</feature>
<feature type="active site" description="Charge relay system" evidence="1">
    <location>
        <position position="495"/>
    </location>
</feature>
<feature type="glycosylation site" description="N-linked (GlcNAc...) asparagine" evidence="2">
    <location>
        <position position="133"/>
    </location>
</feature>
<feature type="glycosylation site" description="N-linked (GlcNAc...) asparagine" evidence="2">
    <location>
        <position position="184"/>
    </location>
</feature>
<feature type="glycosylation site" description="N-linked (GlcNAc...) asparagine" evidence="2">
    <location>
        <position position="283"/>
    </location>
</feature>
<feature type="glycosylation site" description="N-linked (GlcNAc...) asparagine" evidence="2">
    <location>
        <position position="368"/>
    </location>
</feature>
<feature type="glycosylation site" description="N-linked (GlcNAc...) asparagine" evidence="2">
    <location>
        <position position="512"/>
    </location>
</feature>
<feature type="glycosylation site" description="N-linked (GlcNAc...) asparagine" evidence="2">
    <location>
        <position position="592"/>
    </location>
</feature>
<feature type="disulfide bond" evidence="1">
    <location>
        <begin position="91"/>
        <end position="118"/>
    </location>
</feature>
<feature type="disulfide bond" evidence="1">
    <location>
        <begin position="279"/>
        <end position="290"/>
    </location>
</feature>
<feature type="disulfide bond" evidence="1">
    <location>
        <begin position="427"/>
        <end position="580"/>
    </location>
</feature>
<feature type="disulfide bond" description="Interchain" evidence="1">
    <location>
        <position position="631"/>
    </location>
</feature>